<protein>
    <recommendedName>
        <fullName evidence="1 13">ATP-dependent DNA helicase DinG</fullName>
        <ecNumber evidence="1 2 4">5.6.2.3</ecNumber>
    </recommendedName>
    <alternativeName>
        <fullName evidence="1">DNA 5'-3' helicase DinG</fullName>
    </alternativeName>
</protein>
<accession>P27296</accession>
<sequence length="716" mass="81440">MALTAALKAQIAAWYKALQEQIPDFIPRAPQRQMIADVAKTLAGEEGRHLAIEAPTGVGKTLSYLIPGIAIAREEQKTLVVSTANVALQDQIYSKDLPLLKKIIPDLKFTAAFGRGRYVCPRNLTALASTEPTQQDLLAFLDDELTPNNQEEQKRCAKLKGDLDTYKWDGLRDHTDIAIDDDLWRRLSTDKASCLNRNCYYYRECPFFVARREIQEAEVVVANHALVMAAMESEAVLPDPKNLLLVLDEGHHLPDVARDALEMSAEITAPWYRLQLDLFTKLVATCMEQFRPKTIPPLAIPERLNAHCEELYELIASLNNILNLYMPAGQEAEHRFAMGELPDEVLEICQRLAKLTEMLRGLAELFLNDLSEKTGSHDIVRLHRLILQMNRALGMFEAQSKLWRLASLAQSSGAPVTKWATREEREGQLHLWFHCVGIRVSDQLERLLWRSIPHIIVTSATLRSLNSFSRLQEMSGLKEKAGDRFVALDSPFNHCEQGKIVIPRMRVEPSIDNEEQHIAEMAAFFRKQVESKKHLGMLVLFASGRAMQRFLDYVTDLRLMLLVQGDQPRYRLVELHRKRVANGERSVLVGLQSFAEGLDLKGDLLSQVHIHKIAFPPIDSPVVITEGEWLKSLNRYPFEVQSLPSASFNLIQQVGRLIRSHGCWGEVVIYDKRLLTKNYGKRLLDALPVFPIEQPEVPEGIVKKKEKTKSPRRRRR</sequence>
<dbReference type="EC" id="5.6.2.3" evidence="1 2 4"/>
<dbReference type="EMBL" id="L02123">
    <property type="protein sequence ID" value="AAA53655.1"/>
    <property type="molecule type" value="Genomic_DNA"/>
</dbReference>
<dbReference type="EMBL" id="M81935">
    <property type="protein sequence ID" value="AAA23685.1"/>
    <property type="status" value="ALT_INIT"/>
    <property type="molecule type" value="Genomic_DNA"/>
</dbReference>
<dbReference type="EMBL" id="U00096">
    <property type="protein sequence ID" value="AAC73886.1"/>
    <property type="molecule type" value="Genomic_DNA"/>
</dbReference>
<dbReference type="EMBL" id="AP009048">
    <property type="protein sequence ID" value="BAA35465.1"/>
    <property type="molecule type" value="Genomic_DNA"/>
</dbReference>
<dbReference type="PIR" id="G64816">
    <property type="entry name" value="G64816"/>
</dbReference>
<dbReference type="RefSeq" id="NP_415320.1">
    <property type="nucleotide sequence ID" value="NC_000913.3"/>
</dbReference>
<dbReference type="RefSeq" id="WP_001340191.1">
    <property type="nucleotide sequence ID" value="NZ_STEB01000019.1"/>
</dbReference>
<dbReference type="PDB" id="6FWR">
    <property type="method" value="X-ray"/>
    <property type="resolution" value="2.50 A"/>
    <property type="chains" value="A=1-716"/>
</dbReference>
<dbReference type="PDB" id="6FWS">
    <property type="method" value="X-ray"/>
    <property type="resolution" value="2.50 A"/>
    <property type="chains" value="A/B=1-716"/>
</dbReference>
<dbReference type="PDBsum" id="6FWR"/>
<dbReference type="PDBsum" id="6FWS"/>
<dbReference type="SMR" id="P27296"/>
<dbReference type="BioGRID" id="4259964">
    <property type="interactions" value="140"/>
</dbReference>
<dbReference type="FunCoup" id="P27296">
    <property type="interactions" value="103"/>
</dbReference>
<dbReference type="IntAct" id="P27296">
    <property type="interactions" value="22"/>
</dbReference>
<dbReference type="MINT" id="P27296"/>
<dbReference type="STRING" id="511145.b0799"/>
<dbReference type="BindingDB" id="P27296"/>
<dbReference type="PaxDb" id="511145-b0799"/>
<dbReference type="EnsemblBacteria" id="AAC73886">
    <property type="protein sequence ID" value="AAC73886"/>
    <property type="gene ID" value="b0799"/>
</dbReference>
<dbReference type="GeneID" id="945431"/>
<dbReference type="KEGG" id="ecj:JW0784"/>
<dbReference type="KEGG" id="eco:b0799"/>
<dbReference type="KEGG" id="ecoc:C3026_05045"/>
<dbReference type="PATRIC" id="fig|511145.12.peg.826"/>
<dbReference type="EchoBASE" id="EB1332"/>
<dbReference type="eggNOG" id="COG1199">
    <property type="taxonomic scope" value="Bacteria"/>
</dbReference>
<dbReference type="HOGENOM" id="CLU_012117_4_1_6"/>
<dbReference type="InParanoid" id="P27296"/>
<dbReference type="OMA" id="FSSYWQM"/>
<dbReference type="OrthoDB" id="9805194at2"/>
<dbReference type="PhylomeDB" id="P27296"/>
<dbReference type="BioCyc" id="EcoCyc:EG11357-MONOMER"/>
<dbReference type="BioCyc" id="MetaCyc:EG11357-MONOMER"/>
<dbReference type="PRO" id="PR:P27296"/>
<dbReference type="Proteomes" id="UP000000625">
    <property type="component" value="Chromosome"/>
</dbReference>
<dbReference type="GO" id="GO:0051539">
    <property type="term" value="F:4 iron, 4 sulfur cluster binding"/>
    <property type="evidence" value="ECO:0000314"/>
    <property type="project" value="EcoCyc"/>
</dbReference>
<dbReference type="GO" id="GO:0043139">
    <property type="term" value="F:5'-3' DNA helicase activity"/>
    <property type="evidence" value="ECO:0000314"/>
    <property type="project" value="UniProtKB"/>
</dbReference>
<dbReference type="GO" id="GO:0005524">
    <property type="term" value="F:ATP binding"/>
    <property type="evidence" value="ECO:0007669"/>
    <property type="project" value="UniProtKB-UniRule"/>
</dbReference>
<dbReference type="GO" id="GO:0016887">
    <property type="term" value="F:ATP hydrolysis activity"/>
    <property type="evidence" value="ECO:0000314"/>
    <property type="project" value="EcoliWiki"/>
</dbReference>
<dbReference type="GO" id="GO:0140640">
    <property type="term" value="F:catalytic activity, acting on a nucleic acid"/>
    <property type="evidence" value="ECO:0000314"/>
    <property type="project" value="UniProtKB"/>
</dbReference>
<dbReference type="GO" id="GO:0003677">
    <property type="term" value="F:DNA binding"/>
    <property type="evidence" value="ECO:0007669"/>
    <property type="project" value="UniProtKB-UniRule"/>
</dbReference>
<dbReference type="GO" id="GO:0003678">
    <property type="term" value="F:DNA helicase activity"/>
    <property type="evidence" value="ECO:0000314"/>
    <property type="project" value="EcoCyc"/>
</dbReference>
<dbReference type="GO" id="GO:0033677">
    <property type="term" value="F:DNA/RNA helicase activity"/>
    <property type="evidence" value="ECO:0000314"/>
    <property type="project" value="EcoCyc"/>
</dbReference>
<dbReference type="GO" id="GO:0046872">
    <property type="term" value="F:metal ion binding"/>
    <property type="evidence" value="ECO:0007669"/>
    <property type="project" value="UniProtKB-KW"/>
</dbReference>
<dbReference type="GO" id="GO:0006281">
    <property type="term" value="P:DNA repair"/>
    <property type="evidence" value="ECO:0000269"/>
    <property type="project" value="EcoCyc"/>
</dbReference>
<dbReference type="GO" id="GO:0009432">
    <property type="term" value="P:SOS response"/>
    <property type="evidence" value="ECO:0000270"/>
    <property type="project" value="EcoCyc"/>
</dbReference>
<dbReference type="FunFam" id="3.40.50.300:FF:000685">
    <property type="entry name" value="ATP-dependent DNA helicase DinG"/>
    <property type="match status" value="1"/>
</dbReference>
<dbReference type="FunFam" id="3.40.50.300:FF:000700">
    <property type="entry name" value="ATP-dependent DNA helicase DinG"/>
    <property type="match status" value="1"/>
</dbReference>
<dbReference type="Gene3D" id="3.40.50.300">
    <property type="entry name" value="P-loop containing nucleotide triphosphate hydrolases"/>
    <property type="match status" value="2"/>
</dbReference>
<dbReference type="HAMAP" id="MF_02205">
    <property type="entry name" value="DinG_proteobact"/>
    <property type="match status" value="1"/>
</dbReference>
<dbReference type="InterPro" id="IPR006555">
    <property type="entry name" value="ATP-dep_Helicase_C"/>
</dbReference>
<dbReference type="InterPro" id="IPR011545">
    <property type="entry name" value="DEAD/DEAH_box_helicase_dom"/>
</dbReference>
<dbReference type="InterPro" id="IPR045028">
    <property type="entry name" value="DinG/Rad3-like"/>
</dbReference>
<dbReference type="InterPro" id="IPR039000">
    <property type="entry name" value="DinG_proteobact"/>
</dbReference>
<dbReference type="InterPro" id="IPR014013">
    <property type="entry name" value="Helic_SF1/SF2_ATP-bd_DinG/Rad3"/>
</dbReference>
<dbReference type="InterPro" id="IPR006554">
    <property type="entry name" value="Helicase-like_DEXD_c2"/>
</dbReference>
<dbReference type="InterPro" id="IPR014001">
    <property type="entry name" value="Helicase_ATP-bd"/>
</dbReference>
<dbReference type="InterPro" id="IPR027417">
    <property type="entry name" value="P-loop_NTPase"/>
</dbReference>
<dbReference type="InterPro" id="IPR010614">
    <property type="entry name" value="RAD3-like_helicase_DEAD"/>
</dbReference>
<dbReference type="NCBIfam" id="NF008729">
    <property type="entry name" value="PRK11747.1"/>
    <property type="match status" value="1"/>
</dbReference>
<dbReference type="PANTHER" id="PTHR11472:SF59">
    <property type="entry name" value="ATP-DEPENDENT DNA HELICASE DING"/>
    <property type="match status" value="1"/>
</dbReference>
<dbReference type="PANTHER" id="PTHR11472">
    <property type="entry name" value="DNA REPAIR DEAD HELICASE RAD3/XP-D SUBFAMILY MEMBER"/>
    <property type="match status" value="1"/>
</dbReference>
<dbReference type="Pfam" id="PF00270">
    <property type="entry name" value="DEAD"/>
    <property type="match status" value="1"/>
</dbReference>
<dbReference type="Pfam" id="PF06733">
    <property type="entry name" value="DEAD_2"/>
    <property type="match status" value="1"/>
</dbReference>
<dbReference type="Pfam" id="PF13307">
    <property type="entry name" value="Helicase_C_2"/>
    <property type="match status" value="1"/>
</dbReference>
<dbReference type="SMART" id="SM00487">
    <property type="entry name" value="DEXDc"/>
    <property type="match status" value="1"/>
</dbReference>
<dbReference type="SMART" id="SM00488">
    <property type="entry name" value="DEXDc2"/>
    <property type="match status" value="1"/>
</dbReference>
<dbReference type="SMART" id="SM00491">
    <property type="entry name" value="HELICc2"/>
    <property type="match status" value="1"/>
</dbReference>
<dbReference type="SUPFAM" id="SSF52540">
    <property type="entry name" value="P-loop containing nucleoside triphosphate hydrolases"/>
    <property type="match status" value="1"/>
</dbReference>
<dbReference type="PROSITE" id="PS51193">
    <property type="entry name" value="HELICASE_ATP_BIND_2"/>
    <property type="match status" value="1"/>
</dbReference>
<organism>
    <name type="scientific">Escherichia coli (strain K12)</name>
    <dbReference type="NCBI Taxonomy" id="83333"/>
    <lineage>
        <taxon>Bacteria</taxon>
        <taxon>Pseudomonadati</taxon>
        <taxon>Pseudomonadota</taxon>
        <taxon>Gammaproteobacteria</taxon>
        <taxon>Enterobacterales</taxon>
        <taxon>Enterobacteriaceae</taxon>
        <taxon>Escherichia</taxon>
    </lineage>
</organism>
<reference key="1">
    <citation type="journal article" date="1994" name="Jpn. J. Genet.">
        <title>Structural analysis of the rhlE gene of Escherichia coli.</title>
        <authorList>
            <person name="Ohmori H."/>
        </authorList>
    </citation>
    <scope>NUCLEOTIDE SEQUENCE [GENOMIC DNA]</scope>
    <source>
        <strain>K12 / W3110 / ATCC 27325 / DSM 5911</strain>
    </source>
</reference>
<reference key="2">
    <citation type="journal article" date="1992" name="J. Bacteriol.">
        <title>Interaction of LexA repressor with the asymmetric dinG operator and complete nucleotide sequence of the gene.</title>
        <authorList>
            <person name="Lewis L.K."/>
            <person name="Mount D.W."/>
        </authorList>
    </citation>
    <scope>NUCLEOTIDE SEQUENCE [GENOMIC DNA]</scope>
    <scope>INDUCTION</scope>
</reference>
<reference key="3">
    <citation type="journal article" date="1993" name="Nucleic Acids Res.">
        <title>Escherichia coli dinG gene encodes a putative DNA helicase related to a group of eukaryotic helicases including Rad3 protein.</title>
        <authorList>
            <person name="Koonin E.V."/>
        </authorList>
    </citation>
    <scope>SEQUENCE REVISION</scope>
</reference>
<reference key="4">
    <citation type="journal article" date="1996" name="DNA Res.">
        <title>A 718-kb DNA sequence of the Escherichia coli K-12 genome corresponding to the 12.7-28.0 min region on the linkage map.</title>
        <authorList>
            <person name="Oshima T."/>
            <person name="Aiba H."/>
            <person name="Baba T."/>
            <person name="Fujita K."/>
            <person name="Hayashi K."/>
            <person name="Honjo A."/>
            <person name="Ikemoto K."/>
            <person name="Inada T."/>
            <person name="Itoh T."/>
            <person name="Kajihara M."/>
            <person name="Kanai K."/>
            <person name="Kashimoto K."/>
            <person name="Kimura S."/>
            <person name="Kitagawa M."/>
            <person name="Makino K."/>
            <person name="Masuda S."/>
            <person name="Miki T."/>
            <person name="Mizobuchi K."/>
            <person name="Mori H."/>
            <person name="Motomura K."/>
            <person name="Nakamura Y."/>
            <person name="Nashimoto H."/>
            <person name="Nishio Y."/>
            <person name="Saito N."/>
            <person name="Sampei G."/>
            <person name="Seki Y."/>
            <person name="Tagami H."/>
            <person name="Takemoto K."/>
            <person name="Wada C."/>
            <person name="Yamamoto Y."/>
            <person name="Yano M."/>
            <person name="Horiuchi T."/>
        </authorList>
    </citation>
    <scope>NUCLEOTIDE SEQUENCE [LARGE SCALE GENOMIC DNA]</scope>
    <source>
        <strain>K12 / W3110 / ATCC 27325 / DSM 5911</strain>
    </source>
</reference>
<reference key="5">
    <citation type="journal article" date="1997" name="Science">
        <title>The complete genome sequence of Escherichia coli K-12.</title>
        <authorList>
            <person name="Blattner F.R."/>
            <person name="Plunkett G. III"/>
            <person name="Bloch C.A."/>
            <person name="Perna N.T."/>
            <person name="Burland V."/>
            <person name="Riley M."/>
            <person name="Collado-Vides J."/>
            <person name="Glasner J.D."/>
            <person name="Rode C.K."/>
            <person name="Mayhew G.F."/>
            <person name="Gregor J."/>
            <person name="Davis N.W."/>
            <person name="Kirkpatrick H.A."/>
            <person name="Goeden M.A."/>
            <person name="Rose D.J."/>
            <person name="Mau B."/>
            <person name="Shao Y."/>
        </authorList>
    </citation>
    <scope>NUCLEOTIDE SEQUENCE [LARGE SCALE GENOMIC DNA]</scope>
    <source>
        <strain>K12 / MG1655 / ATCC 47076</strain>
    </source>
</reference>
<reference key="6">
    <citation type="journal article" date="2006" name="Mol. Syst. Biol.">
        <title>Highly accurate genome sequences of Escherichia coli K-12 strains MG1655 and W3110.</title>
        <authorList>
            <person name="Hayashi K."/>
            <person name="Morooka N."/>
            <person name="Yamamoto Y."/>
            <person name="Fujita K."/>
            <person name="Isono K."/>
            <person name="Choi S."/>
            <person name="Ohtsubo E."/>
            <person name="Baba T."/>
            <person name="Wanner B.L."/>
            <person name="Mori H."/>
            <person name="Horiuchi T."/>
        </authorList>
    </citation>
    <scope>NUCLEOTIDE SEQUENCE [LARGE SCALE GENOMIC DNA]</scope>
    <source>
        <strain>K12 / W3110 / ATCC 27325 / DSM 5911</strain>
    </source>
</reference>
<reference key="7">
    <citation type="journal article" date="2003" name="J. Biol. Chem.">
        <title>Characterization of the DNA damage-inducible helicase DinG from Escherichia coli.</title>
        <authorList>
            <person name="Voloshin O.N."/>
            <person name="Vanevski F."/>
            <person name="Khil P.P."/>
            <person name="Camerini-Otero R.D."/>
        </authorList>
    </citation>
    <scope>FUNCTION AS A 5'-3' HELICASE</scope>
    <scope>CATALYTIC ACTIVITY</scope>
    <scope>ACTIVITY REGULATION</scope>
    <scope>COFACTOR</scope>
    <scope>SUBUNIT</scope>
    <scope>DISRUPTION PHENOTYPE</scope>
    <source>
        <strain>K12 / W3110 / ATCC 27325 / DSM 5911</strain>
    </source>
</reference>
<reference key="8">
    <citation type="journal article" date="2007" name="J. Biol. Chem.">
        <title>The DinG protein from Escherichia coli is a structure-specific helicase.</title>
        <authorList>
            <person name="Voloshin O.N."/>
            <person name="Camerini-Otero R.D."/>
        </authorList>
    </citation>
    <scope>FUNCTION AS A 5'-3' HELICASE</scope>
    <scope>CATALYTIC ACTIVITY</scope>
</reference>
<reference key="9">
    <citation type="journal article" date="2009" name="J. Biol. Chem.">
        <title>Redox control of the DNA damage-inducible protein DinG helicase activity via its iron-sulfur cluster.</title>
        <authorList>
            <person name="Ren B."/>
            <person name="Duan X."/>
            <person name="Ding H."/>
        </authorList>
    </citation>
    <scope>COFACTOR</scope>
    <scope>IRON-SULFUR-BINDING</scope>
    <scope>ACTIVITY REGULATION</scope>
    <scope>MUTAGENESIS OF CYS-120; CYS-194; CYS-199 AND CYS-205</scope>
</reference>
<reference key="10">
    <citation type="journal article" date="2014" name="J. Am. Chem. Soc.">
        <title>DNA-mediated signaling by proteins with 4Fe-4S clusters is necessary for genomic integrity.</title>
        <authorList>
            <person name="Grodick M.A."/>
            <person name="Segal H.M."/>
            <person name="Zwang T.J."/>
            <person name="Barton J.K."/>
        </authorList>
    </citation>
    <scope>FUNCTION</scope>
</reference>
<reference key="11">
    <citation type="journal article" date="2014" name="J. Biol. Chem.">
        <title>Mycobacterium tuberculosis DinG is a structure-specific helicase that unwinds G4 DNA: implications for targeting G4 DNA as a novel therapeutic approach.</title>
        <authorList>
            <person name="Thakur R.S."/>
            <person name="Desingu A."/>
            <person name="Basavaraju S."/>
            <person name="Subramanya S."/>
            <person name="Rao D.N."/>
            <person name="Nagaraju G."/>
        </authorList>
    </citation>
    <scope>FUNCTION AS A 5'-3' HELICASE</scope>
    <scope>CATALYTIC ACTIVITY</scope>
    <scope>COFACTOR</scope>
    <scope>ACTIVITY REGULATION</scope>
</reference>
<reference key="12">
    <citation type="journal article" date="2015" name="PLoS Genet.">
        <title>Connecting replication and repair: YoaA, a helicase-related protein, promotes azidothymidine tolerance through association with Chi, an accessory clamp loader protein.</title>
        <authorList>
            <person name="Brown L.T."/>
            <person name="Sutera V.A. Jr."/>
            <person name="Zhou S."/>
            <person name="Weitzel C.S."/>
            <person name="Cheng Y."/>
            <person name="Lovett S.T."/>
        </authorList>
    </citation>
    <scope>DISRUPTION PHENOTYPE</scope>
    <source>
        <strain>K12 / MG1655 / ATCC 47076</strain>
    </source>
</reference>
<reference key="13">
    <citation type="journal article" date="2023" name="Sci. Rep.">
        <title>Exploring the G-quadruplex binding and unwinding activity of the bacterial FeS helicase DinG.</title>
        <authorList>
            <person name="De Piante E."/>
            <person name="D'Aria F."/>
            <person name="Napolitano L.M.R."/>
            <person name="Amato J."/>
            <person name="Pirrello S."/>
            <person name="Onesti S."/>
            <person name="Giancola C."/>
        </authorList>
    </citation>
    <scope>FUNCTION AS A 5'-3' HELICASE</scope>
    <scope>G-QUADRUPLEX DNA-BINDING</scope>
    <scope>ACTIVITY REGULATION</scope>
</reference>
<reference key="14">
    <citation type="journal article" date="2023" name="Genes (Basel)">
        <title>Genomic Instability of G-Quadruplex Sequences in Escherichia coli: Roles of DinG, RecG, and RecQ Helicases.</title>
        <authorList>
            <person name="Parekh V.J."/>
            <person name="Wegrzyn G."/>
            <person name="Arluison V."/>
            <person name="Sinden R.R."/>
        </authorList>
    </citation>
    <scope>DISRUPTION PHENOTYPE</scope>
    <source>
        <strain>K12 / BW25113</strain>
    </source>
</reference>
<reference evidence="16 17" key="15">
    <citation type="journal article" date="2018" name="Elife">
        <title>DNA translocation mechanism of an XPD family helicase.</title>
        <authorList>
            <person name="Cheng K."/>
            <person name="Wigley D.B."/>
        </authorList>
    </citation>
    <scope>X-RAY CRYSTALLOGRAPHY (2.50 ANGSTROMS) IN COMPLEX WITH A [4FE-4S] CLUSTER AND SSDNA WITH AND WITHOUT AN ATP ANALOG</scope>
    <scope>FUNCTION</scope>
    <scope>CATALYTIC ACTIVITY</scope>
    <scope>COFACTOR</scope>
    <scope>SUBUNIT</scope>
    <scope>DOMAIN</scope>
    <scope>DNA-BINDING</scope>
    <scope>MUTAGENESIS OF ARG-117; ARG-211; PHE-615; ILE-618; TYR-636; PHE-638 AND ARG-673</scope>
</reference>
<feature type="chain" id="PRO_0000101996" description="ATP-dependent DNA helicase DinG">
    <location>
        <begin position="1"/>
        <end position="716"/>
    </location>
</feature>
<feature type="domain" description="Helicase ATP-binding" evidence="1">
    <location>
        <begin position="17"/>
        <end position="294"/>
    </location>
</feature>
<feature type="region of interest" description="HD1 domain N-terminus" evidence="9">
    <location>
        <begin position="1"/>
        <end position="114"/>
    </location>
</feature>
<feature type="region of interest" description="[4Fe-4S] domain" evidence="9">
    <location>
        <begin position="115"/>
        <end position="216"/>
    </location>
</feature>
<feature type="region of interest" description="HD1 domain middle" evidence="9">
    <location>
        <begin position="217"/>
        <end position="261"/>
    </location>
</feature>
<feature type="region of interest" description="Arch domain" evidence="9">
    <location>
        <begin position="262"/>
        <end position="438"/>
    </location>
</feature>
<feature type="region of interest" description="HD1 domain middle" evidence="9">
    <location>
        <begin position="439"/>
        <end position="491"/>
    </location>
</feature>
<feature type="region of interest" description="HD2 domain" evidence="9">
    <location>
        <begin position="492"/>
        <end position="716"/>
    </location>
</feature>
<feature type="short sequence motif" description="DEAH box" evidence="1">
    <location>
        <begin position="248"/>
        <end position="251"/>
    </location>
</feature>
<feature type="binding site" evidence="15 17">
    <location>
        <position position="26"/>
    </location>
    <ligand>
        <name>ATP</name>
        <dbReference type="ChEBI" id="CHEBI:30616"/>
    </ligand>
</feature>
<feature type="binding site" evidence="15 17">
    <location>
        <position position="31"/>
    </location>
    <ligand>
        <name>ATP</name>
        <dbReference type="ChEBI" id="CHEBI:30616"/>
    </ligand>
</feature>
<feature type="binding site" evidence="15 17">
    <location>
        <position position="60"/>
    </location>
    <ligand>
        <name>ATP</name>
        <dbReference type="ChEBI" id="CHEBI:30616"/>
    </ligand>
</feature>
<feature type="binding site" evidence="15 17">
    <location>
        <position position="61"/>
    </location>
    <ligand>
        <name>ATP</name>
        <dbReference type="ChEBI" id="CHEBI:30616"/>
    </ligand>
</feature>
<feature type="binding site" evidence="1 9 14 17">
    <location>
        <position position="120"/>
    </location>
    <ligand>
        <name>[4Fe-4S] cluster</name>
        <dbReference type="ChEBI" id="CHEBI:49883"/>
    </ligand>
</feature>
<feature type="binding site" evidence="1 9 14 17">
    <location>
        <position position="194"/>
    </location>
    <ligand>
        <name>[4Fe-4S] cluster</name>
        <dbReference type="ChEBI" id="CHEBI:49883"/>
    </ligand>
</feature>
<feature type="binding site" evidence="1 9 14 17">
    <location>
        <position position="199"/>
    </location>
    <ligand>
        <name>[4Fe-4S] cluster</name>
        <dbReference type="ChEBI" id="CHEBI:49883"/>
    </ligand>
</feature>
<feature type="binding site" evidence="1 9 14 17">
    <location>
        <position position="205"/>
    </location>
    <ligand>
        <name>[4Fe-4S] cluster</name>
        <dbReference type="ChEBI" id="CHEBI:49883"/>
    </ligand>
</feature>
<feature type="binding site" evidence="15 17">
    <location>
        <position position="599"/>
    </location>
    <ligand>
        <name>ATP</name>
        <dbReference type="ChEBI" id="CHEBI:30616"/>
    </ligand>
</feature>
<feature type="binding site" evidence="15 17">
    <location>
        <position position="656"/>
    </location>
    <ligand>
        <name>ATP</name>
        <dbReference type="ChEBI" id="CHEBI:30616"/>
    </ligand>
</feature>
<feature type="binding site" evidence="15 17">
    <location>
        <position position="659"/>
    </location>
    <ligand>
        <name>ATP</name>
        <dbReference type="ChEBI" id="CHEBI:30616"/>
    </ligand>
</feature>
<feature type="mutagenesis site" description="Significant decrease in helicase activity, small decrease in ssDNA binding." evidence="9">
    <original>R</original>
    <variation>A</variation>
    <location>
        <position position="117"/>
    </location>
</feature>
<feature type="mutagenesis site" description="Abolishes iron-sulfur-binding." evidence="5">
    <original>C</original>
    <variation>S</variation>
    <location>
        <position position="120"/>
    </location>
</feature>
<feature type="mutagenesis site" description="Abolishes iron-sulfur-binding." evidence="5">
    <original>C</original>
    <variation>S</variation>
    <location>
        <position position="194"/>
    </location>
</feature>
<feature type="mutagenesis site" description="Abolishes iron-sulfur-binding." evidence="5">
    <original>C</original>
    <variation>S</variation>
    <location>
        <position position="199"/>
    </location>
</feature>
<feature type="mutagenesis site" description="Abolishes iron-sulfur-binding." evidence="5">
    <original>C</original>
    <variation>S</variation>
    <location>
        <position position="205"/>
    </location>
</feature>
<feature type="mutagenesis site" description="Significant decrease in helicase activity, small decrease in ssDNA binding." evidence="9">
    <original>R</original>
    <variation>A</variation>
    <location>
        <position position="211"/>
    </location>
</feature>
<feature type="mutagenesis site" description="Loss of helicase activity, loss of ssDNA binding." evidence="9">
    <original>F</original>
    <variation>A</variation>
    <location>
        <position position="615"/>
    </location>
</feature>
<feature type="mutagenesis site" description="Loss of helicase activity, loss of ssDNA binding." evidence="9">
    <original>I</original>
    <variation>A</variation>
    <location>
        <position position="618"/>
    </location>
</feature>
<feature type="mutagenesis site" description="Loss of helicase activity, loss of ssDNA binding." evidence="9">
    <original>Y</original>
    <variation>A</variation>
    <location>
        <position position="636"/>
    </location>
</feature>
<feature type="mutagenesis site" description="Loss of helicase activity, loss of ssDNA binding." evidence="9">
    <original>F</original>
    <variation>A</variation>
    <location>
        <position position="638"/>
    </location>
</feature>
<feature type="mutagenesis site" description="Loss of helicase activity, loss of ssDNA binding." evidence="9">
    <original>R</original>
    <variation>A</variation>
    <location>
        <position position="673"/>
    </location>
</feature>
<feature type="sequence conflict" description="In Ref. 2; AAA23685." evidence="13" ref="2">
    <original>N</original>
    <variation>H</variation>
    <location>
        <position position="513"/>
    </location>
</feature>
<feature type="helix" evidence="18">
    <location>
        <begin position="5"/>
        <end position="19"/>
    </location>
</feature>
<feature type="helix" evidence="18">
    <location>
        <begin position="29"/>
        <end position="42"/>
    </location>
</feature>
<feature type="strand" evidence="18">
    <location>
        <begin position="50"/>
        <end position="53"/>
    </location>
</feature>
<feature type="helix" evidence="18">
    <location>
        <begin position="60"/>
        <end position="75"/>
    </location>
</feature>
<feature type="strand" evidence="18">
    <location>
        <begin position="78"/>
        <end position="85"/>
    </location>
</feature>
<feature type="helix" evidence="18">
    <location>
        <begin position="86"/>
        <end position="94"/>
    </location>
</feature>
<feature type="helix" evidence="18">
    <location>
        <begin position="96"/>
        <end position="103"/>
    </location>
</feature>
<feature type="strand" evidence="18">
    <location>
        <begin position="109"/>
        <end position="111"/>
    </location>
</feature>
<feature type="helix" evidence="18">
    <location>
        <begin position="115"/>
        <end position="117"/>
    </location>
</feature>
<feature type="helix" evidence="18">
    <location>
        <begin position="121"/>
        <end position="129"/>
    </location>
</feature>
<feature type="helix" evidence="18">
    <location>
        <begin position="137"/>
        <end position="142"/>
    </location>
</feature>
<feature type="helix" evidence="18">
    <location>
        <begin position="150"/>
        <end position="164"/>
    </location>
</feature>
<feature type="helix" evidence="18">
    <location>
        <begin position="172"/>
        <end position="174"/>
    </location>
</feature>
<feature type="helix" evidence="18">
    <location>
        <begin position="181"/>
        <end position="187"/>
    </location>
</feature>
<feature type="turn" evidence="18">
    <location>
        <begin position="191"/>
        <end position="193"/>
    </location>
</feature>
<feature type="helix" evidence="18">
    <location>
        <begin position="196"/>
        <end position="198"/>
    </location>
</feature>
<feature type="helix" evidence="18">
    <location>
        <begin position="202"/>
        <end position="204"/>
    </location>
</feature>
<feature type="helix" evidence="18">
    <location>
        <begin position="206"/>
        <end position="215"/>
    </location>
</feature>
<feature type="strand" evidence="18">
    <location>
        <begin position="218"/>
        <end position="223"/>
    </location>
</feature>
<feature type="helix" evidence="18">
    <location>
        <begin position="224"/>
        <end position="232"/>
    </location>
</feature>
<feature type="strand" evidence="19">
    <location>
        <begin position="235"/>
        <end position="237"/>
    </location>
</feature>
<feature type="helix" evidence="18">
    <location>
        <begin position="240"/>
        <end position="242"/>
    </location>
</feature>
<feature type="strand" evidence="18">
    <location>
        <begin position="243"/>
        <end position="247"/>
    </location>
</feature>
<feature type="helix" evidence="18">
    <location>
        <begin position="250"/>
        <end position="252"/>
    </location>
</feature>
<feature type="helix" evidence="18">
    <location>
        <begin position="253"/>
        <end position="258"/>
    </location>
</feature>
<feature type="helix" evidence="18">
    <location>
        <begin position="259"/>
        <end position="261"/>
    </location>
</feature>
<feature type="strand" evidence="18">
    <location>
        <begin position="262"/>
        <end position="266"/>
    </location>
</feature>
<feature type="helix" evidence="18">
    <location>
        <begin position="269"/>
        <end position="289"/>
    </location>
</feature>
<feature type="helix" evidence="18">
    <location>
        <begin position="297"/>
        <end position="299"/>
    </location>
</feature>
<feature type="helix" evidence="18">
    <location>
        <begin position="301"/>
        <end position="323"/>
    </location>
</feature>
<feature type="strand" evidence="18">
    <location>
        <begin position="332"/>
        <end position="335"/>
    </location>
</feature>
<feature type="helix" evidence="18">
    <location>
        <begin position="337"/>
        <end position="339"/>
    </location>
</feature>
<feature type="helix" evidence="18">
    <location>
        <begin position="343"/>
        <end position="372"/>
    </location>
</feature>
<feature type="helix" evidence="18">
    <location>
        <begin position="379"/>
        <end position="407"/>
    </location>
</feature>
<feature type="strand" evidence="18">
    <location>
        <begin position="416"/>
        <end position="424"/>
    </location>
</feature>
<feature type="strand" evidence="18">
    <location>
        <begin position="426"/>
        <end position="438"/>
    </location>
</feature>
<feature type="helix" evidence="18">
    <location>
        <begin position="441"/>
        <end position="447"/>
    </location>
</feature>
<feature type="turn" evidence="18">
    <location>
        <begin position="448"/>
        <end position="451"/>
    </location>
</feature>
<feature type="strand" evidence="18">
    <location>
        <begin position="455"/>
        <end position="460"/>
    </location>
</feature>
<feature type="helix" evidence="18">
    <location>
        <begin position="469"/>
        <end position="475"/>
    </location>
</feature>
<feature type="turn" evidence="18">
    <location>
        <begin position="479"/>
        <end position="482"/>
    </location>
</feature>
<feature type="strand" evidence="18">
    <location>
        <begin position="484"/>
        <end position="487"/>
    </location>
</feature>
<feature type="helix" evidence="18">
    <location>
        <begin position="494"/>
        <end position="497"/>
    </location>
</feature>
<feature type="strand" evidence="18">
    <location>
        <begin position="498"/>
        <end position="501"/>
    </location>
</feature>
<feature type="turn" evidence="18">
    <location>
        <begin position="511"/>
        <end position="513"/>
    </location>
</feature>
<feature type="helix" evidence="18">
    <location>
        <begin position="514"/>
        <end position="530"/>
    </location>
</feature>
<feature type="strand" evidence="18">
    <location>
        <begin position="535"/>
        <end position="540"/>
    </location>
</feature>
<feature type="helix" evidence="18">
    <location>
        <begin position="544"/>
        <end position="553"/>
    </location>
</feature>
<feature type="helix" evidence="18">
    <location>
        <begin position="555"/>
        <end position="560"/>
    </location>
</feature>
<feature type="strand" evidence="18">
    <location>
        <begin position="561"/>
        <end position="564"/>
    </location>
</feature>
<feature type="helix" evidence="18">
    <location>
        <begin position="569"/>
        <end position="581"/>
    </location>
</feature>
<feature type="strand" evidence="18">
    <location>
        <begin position="586"/>
        <end position="591"/>
    </location>
</feature>
<feature type="helix" evidence="18">
    <location>
        <begin position="592"/>
        <end position="597"/>
    </location>
</feature>
<feature type="helix" evidence="18">
    <location>
        <begin position="602"/>
        <end position="604"/>
    </location>
</feature>
<feature type="strand" evidence="18">
    <location>
        <begin position="606"/>
        <end position="610"/>
    </location>
</feature>
<feature type="helix" evidence="18">
    <location>
        <begin position="621"/>
        <end position="632"/>
    </location>
</feature>
<feature type="helix" evidence="18">
    <location>
        <begin position="637"/>
        <end position="640"/>
    </location>
</feature>
<feature type="helix" evidence="18">
    <location>
        <begin position="642"/>
        <end position="654"/>
    </location>
</feature>
<feature type="strand" evidence="18">
    <location>
        <begin position="665"/>
        <end position="669"/>
    </location>
</feature>
<feature type="helix" evidence="18">
    <location>
        <begin position="673"/>
        <end position="676"/>
    </location>
</feature>
<feature type="helix" evidence="18">
    <location>
        <begin position="678"/>
        <end position="685"/>
    </location>
</feature>
<name>DING_ECOLI</name>
<proteinExistence type="evidence at protein level"/>
<comment type="function">
    <text evidence="2 4 6 7 9 10">DNA-dependent ATPase and 5'-3' DNA helicase (PubMed:12748189, PubMed:17416902, PubMed:25059658, PubMed:37537265). Can also unwind DNA:RNA hybrid duplexes (PubMed:17416902). Is active on D-loops, R-loops, and on forked structures (PubMed:17416902, PubMed:37537265). Unwinds G-quadruplex DNA in a 5'-3' direction; unwinding efficiency differs on different substrates (PubMed:25059658, PubMed:37537265). Does not appear to unwind replication forks or Holliday junctions (PubMed:25059658). Translocates on single-stranded (ss)DNA with a 5'-3' polarity (PubMed:25059658). In vitro at high concentrations also unwinds in a 3'-5' direction (PubMed:25059658). May be involved in recombinational DNA repair and the resumption of replication after DNA damage (PubMed:17416902). The [4Fe-4S] cluster is redox active at cellular potentials and is involved in DNA-mediated charge-transport signaling between DNA repair proteins from distinct pathways (PubMed:24738733). DinG cooperates at long-range with endonuclease III, a base excision repair enzyme, using DNA charge transport to redistribute to regions of DNA damage (PubMed:24738733). Binds 10-11 nucleotides of ssDNA in a positively-charged groove across the helicase domains (PubMed:30520735).</text>
</comment>
<comment type="catalytic activity">
    <reaction evidence="1 2 4 7 9">
        <text>Couples ATP hydrolysis with the unwinding of duplex DNA at the replication fork by translocating in the 5'-3' direction. This creates two antiparallel DNA single strands (ssDNA). The leading ssDNA polymer is the template for DNA polymerase III holoenzyme which synthesizes a continuous strand.</text>
        <dbReference type="EC" id="5.6.2.3"/>
    </reaction>
</comment>
<comment type="catalytic activity">
    <reaction evidence="1 2 9">
        <text>ATP + H2O = ADP + phosphate + H(+)</text>
        <dbReference type="Rhea" id="RHEA:13065"/>
        <dbReference type="ChEBI" id="CHEBI:15377"/>
        <dbReference type="ChEBI" id="CHEBI:15378"/>
        <dbReference type="ChEBI" id="CHEBI:30616"/>
        <dbReference type="ChEBI" id="CHEBI:43474"/>
        <dbReference type="ChEBI" id="CHEBI:456216"/>
        <dbReference type="EC" id="5.6.2.3"/>
    </reaction>
</comment>
<comment type="cofactor">
    <cofactor evidence="1 5 7 9">
        <name>[4Fe-4S] cluster</name>
        <dbReference type="ChEBI" id="CHEBI:49883"/>
    </cofactor>
    <text evidence="1 5 9">Binds 1 [4Fe-4S] cluster (PubMed:19074432, PubMed:25059658, PubMed:30520735). The iron-sulfur cluster is essential for protein stability and helicase activity.</text>
</comment>
<comment type="cofactor">
    <cofactor evidence="2">
        <name>Mg(2+)</name>
        <dbReference type="ChEBI" id="CHEBI:18420"/>
    </cofactor>
    <text evidence="2">ATP-dependent DNA helicase activity requires divalent cations (Mg(2+), Ca(2+) or Mn(2+)) but is not detected in the presence of Zn(2+) (PubMed:12748189).</text>
</comment>
<comment type="activity regulation">
    <text evidence="5 7 10">ATPase activity is 15-fold stimulated by single-stranded DNA (ssDNA). Reduction of the [4Fe-4S] cluster reversibly switches off helicase activity. Remains fully active after exposure to 100-fold excess of hydrogen peroxide, but the [4Fe-4S] cluster can be efficiently modified by nitric oxide (NO), forming the DinG-bound dinitrosyl iron complex with the concomitant inactivation of helicase activity (PubMed:19074432). Helicase activity on G-quadruplex DNA is inhibited by porphyrin derivatives meso-tetra (N-methyl-4-pyridyl) porphine tetra tosylate (T4) and N-methyl mesoporphyrin IX (NMM) (PubMed:25059658). Helicase activity on forked duplexes is not inhibited by T4 or NMM (PubMed:25059658). G-quadruplex ligands such as Pyridostatin, PhenDC3, BRACO-19 and Netropsin can alter recognition and unwinding of G-quadruplex DNAs; the effect is both ligand- and G-quadruplex DNA-specific (PubMed:37537265).</text>
</comment>
<comment type="subunit">
    <text evidence="2 9">Monomer in solution (PubMed:12748189, PubMed:30520735).</text>
</comment>
<comment type="interaction">
    <interactant intactId="EBI-1114590">
        <id>P27296</id>
    </interactant>
    <interactant intactId="EBI-1118620">
        <id>P0AGE0</id>
        <label>ssb</label>
    </interactant>
    <organismsDiffer>false</organismsDiffer>
    <experiments>2</experiments>
</comment>
<comment type="induction">
    <text evidence="3">DNA damage-inducible. Transcriptionally regulated by LexA.</text>
</comment>
<comment type="domain">
    <text evidence="9 15">Has 4 domains; the discontinous helicase 1 (HD1), helicase 2 (HD2), arch and Fe-S cluster domains (PubMed:30520735). The arch domain sits above the other domains and contacts the Fe-S cluster domain above the ssDNA-binding surface (PubMed:30520735). Addition of an ATP analog to a DinG-ssDNA crystal induces changes in the relative orientation of the domains; HD1 remains tightly bound while HD2 slides along the DNA, upon ATP hydrolysis HD1 slides while HD2 remains tightly bound, thus the enzyme translocates in a 5'-3' direction along the ssDNA (Probable) (PubMed:30520735).</text>
</comment>
<comment type="disruption phenotype">
    <text evidence="2 8 11">Knockout results in a slight reduction of UV resistance (PubMed:12748189). Knockout mutants are sensitive to very high levels of chain-terminating nucleoside analog 3' azidothymidine (AZT) (PubMed:26544712). Increased genetic instability of G-quadruplex DNA (PubMed:37761860).</text>
</comment>
<comment type="similarity">
    <text evidence="1 13">Belongs to the helicase family. DinG subfamily. Type 1 sub-subfamily.</text>
</comment>
<comment type="sequence caution" evidence="13">
    <conflict type="erroneous initiation">
        <sequence resource="EMBL-CDS" id="AAA23685"/>
    </conflict>
    <text>Truncated N-terminus.</text>
</comment>
<keyword id="KW-0002">3D-structure</keyword>
<keyword id="KW-0004">4Fe-4S</keyword>
<keyword id="KW-0067">ATP-binding</keyword>
<keyword id="KW-0238">DNA-binding</keyword>
<keyword id="KW-0347">Helicase</keyword>
<keyword id="KW-0378">Hydrolase</keyword>
<keyword id="KW-0408">Iron</keyword>
<keyword id="KW-0411">Iron-sulfur</keyword>
<keyword id="KW-0413">Isomerase</keyword>
<keyword id="KW-0479">Metal-binding</keyword>
<keyword id="KW-0547">Nucleotide-binding</keyword>
<keyword id="KW-1185">Reference proteome</keyword>
<evidence type="ECO:0000255" key="1">
    <source>
        <dbReference type="HAMAP-Rule" id="MF_02205"/>
    </source>
</evidence>
<evidence type="ECO:0000269" key="2">
    <source>
    </source>
</evidence>
<evidence type="ECO:0000269" key="3">
    <source>
    </source>
</evidence>
<evidence type="ECO:0000269" key="4">
    <source>
    </source>
</evidence>
<evidence type="ECO:0000269" key="5">
    <source>
    </source>
</evidence>
<evidence type="ECO:0000269" key="6">
    <source>
    </source>
</evidence>
<evidence type="ECO:0000269" key="7">
    <source>
    </source>
</evidence>
<evidence type="ECO:0000269" key="8">
    <source>
    </source>
</evidence>
<evidence type="ECO:0000269" key="9">
    <source>
    </source>
</evidence>
<evidence type="ECO:0000269" key="10">
    <source>
    </source>
</evidence>
<evidence type="ECO:0000269" key="11">
    <source>
    </source>
</evidence>
<evidence type="ECO:0000303" key="12">
    <source>
    </source>
</evidence>
<evidence type="ECO:0000305" key="13"/>
<evidence type="ECO:0000305" key="14">
    <source>
    </source>
</evidence>
<evidence type="ECO:0000305" key="15">
    <source>
    </source>
</evidence>
<evidence type="ECO:0007744" key="16">
    <source>
        <dbReference type="PDB" id="6FWR"/>
    </source>
</evidence>
<evidence type="ECO:0007744" key="17">
    <source>
        <dbReference type="PDB" id="6FWS"/>
    </source>
</evidence>
<evidence type="ECO:0007829" key="18">
    <source>
        <dbReference type="PDB" id="6FWR"/>
    </source>
</evidence>
<evidence type="ECO:0007829" key="19">
    <source>
        <dbReference type="PDB" id="6FWS"/>
    </source>
</evidence>
<gene>
    <name evidence="1 12" type="primary">dinG</name>
    <name type="synonym">rarB</name>
    <name type="ordered locus">b0799</name>
    <name type="ordered locus">JW0784</name>
</gene>